<reference key="1">
    <citation type="submission" date="2006-10" db="EMBL/GenBank/DDBJ databases">
        <title>Complete sequence of chromosome of Pelobacter propionicus DSM 2379.</title>
        <authorList>
            <consortium name="US DOE Joint Genome Institute"/>
            <person name="Copeland A."/>
            <person name="Lucas S."/>
            <person name="Lapidus A."/>
            <person name="Barry K."/>
            <person name="Detter J.C."/>
            <person name="Glavina del Rio T."/>
            <person name="Hammon N."/>
            <person name="Israni S."/>
            <person name="Dalin E."/>
            <person name="Tice H."/>
            <person name="Pitluck S."/>
            <person name="Saunders E."/>
            <person name="Brettin T."/>
            <person name="Bruce D."/>
            <person name="Han C."/>
            <person name="Tapia R."/>
            <person name="Schmutz J."/>
            <person name="Larimer F."/>
            <person name="Land M."/>
            <person name="Hauser L."/>
            <person name="Kyrpides N."/>
            <person name="Kim E."/>
            <person name="Lovley D."/>
            <person name="Richardson P."/>
        </authorList>
    </citation>
    <scope>NUCLEOTIDE SEQUENCE [LARGE SCALE GENOMIC DNA]</scope>
    <source>
        <strain>DSM 2379 / NBRC 103807 / OttBd1</strain>
    </source>
</reference>
<organism>
    <name type="scientific">Pelobacter propionicus (strain DSM 2379 / NBRC 103807 / OttBd1)</name>
    <dbReference type="NCBI Taxonomy" id="338966"/>
    <lineage>
        <taxon>Bacteria</taxon>
        <taxon>Pseudomonadati</taxon>
        <taxon>Thermodesulfobacteriota</taxon>
        <taxon>Desulfuromonadia</taxon>
        <taxon>Desulfuromonadales</taxon>
        <taxon>Desulfuromonadaceae</taxon>
        <taxon>Pelobacter</taxon>
    </lineage>
</organism>
<sequence length="121" mass="13168">MARTAQKLITRIKRKVRVRKKIVGTAQRPRLNVFKSARHIYAQLIDDTAGITLASCSTLSTSAESLSYTGNIAAAVHVGKEIAGLAKEKNITAVVFDRNGFLYHGRIKALADAARESGLLF</sequence>
<evidence type="ECO:0000255" key="1">
    <source>
        <dbReference type="HAMAP-Rule" id="MF_01337"/>
    </source>
</evidence>
<evidence type="ECO:0000305" key="2"/>
<feature type="chain" id="PRO_1000053076" description="Large ribosomal subunit protein uL18">
    <location>
        <begin position="1"/>
        <end position="121"/>
    </location>
</feature>
<accession>A1ALV7</accession>
<protein>
    <recommendedName>
        <fullName evidence="1">Large ribosomal subunit protein uL18</fullName>
    </recommendedName>
    <alternativeName>
        <fullName evidence="2">50S ribosomal protein L18</fullName>
    </alternativeName>
</protein>
<dbReference type="EMBL" id="CP000482">
    <property type="protein sequence ID" value="ABK98327.1"/>
    <property type="molecule type" value="Genomic_DNA"/>
</dbReference>
<dbReference type="RefSeq" id="WP_011734639.1">
    <property type="nucleotide sequence ID" value="NC_008609.1"/>
</dbReference>
<dbReference type="SMR" id="A1ALV7"/>
<dbReference type="STRING" id="338966.Ppro_0696"/>
<dbReference type="KEGG" id="ppd:Ppro_0696"/>
<dbReference type="eggNOG" id="COG0256">
    <property type="taxonomic scope" value="Bacteria"/>
</dbReference>
<dbReference type="HOGENOM" id="CLU_098841_0_1_7"/>
<dbReference type="OrthoDB" id="9810939at2"/>
<dbReference type="Proteomes" id="UP000006732">
    <property type="component" value="Chromosome"/>
</dbReference>
<dbReference type="GO" id="GO:0022625">
    <property type="term" value="C:cytosolic large ribosomal subunit"/>
    <property type="evidence" value="ECO:0007669"/>
    <property type="project" value="TreeGrafter"/>
</dbReference>
<dbReference type="GO" id="GO:0008097">
    <property type="term" value="F:5S rRNA binding"/>
    <property type="evidence" value="ECO:0007669"/>
    <property type="project" value="TreeGrafter"/>
</dbReference>
<dbReference type="GO" id="GO:0003735">
    <property type="term" value="F:structural constituent of ribosome"/>
    <property type="evidence" value="ECO:0007669"/>
    <property type="project" value="InterPro"/>
</dbReference>
<dbReference type="GO" id="GO:0006412">
    <property type="term" value="P:translation"/>
    <property type="evidence" value="ECO:0007669"/>
    <property type="project" value="UniProtKB-UniRule"/>
</dbReference>
<dbReference type="CDD" id="cd00432">
    <property type="entry name" value="Ribosomal_L18_L5e"/>
    <property type="match status" value="1"/>
</dbReference>
<dbReference type="FunFam" id="3.30.420.100:FF:000001">
    <property type="entry name" value="50S ribosomal protein L18"/>
    <property type="match status" value="1"/>
</dbReference>
<dbReference type="Gene3D" id="3.30.420.100">
    <property type="match status" value="1"/>
</dbReference>
<dbReference type="HAMAP" id="MF_01337_B">
    <property type="entry name" value="Ribosomal_uL18_B"/>
    <property type="match status" value="1"/>
</dbReference>
<dbReference type="InterPro" id="IPR004389">
    <property type="entry name" value="Ribosomal_uL18_bac-type"/>
</dbReference>
<dbReference type="InterPro" id="IPR005484">
    <property type="entry name" value="Ribosomal_uL18_bac/euk"/>
</dbReference>
<dbReference type="NCBIfam" id="TIGR00060">
    <property type="entry name" value="L18_bact"/>
    <property type="match status" value="1"/>
</dbReference>
<dbReference type="PANTHER" id="PTHR12899">
    <property type="entry name" value="39S RIBOSOMAL PROTEIN L18, MITOCHONDRIAL"/>
    <property type="match status" value="1"/>
</dbReference>
<dbReference type="PANTHER" id="PTHR12899:SF3">
    <property type="entry name" value="LARGE RIBOSOMAL SUBUNIT PROTEIN UL18M"/>
    <property type="match status" value="1"/>
</dbReference>
<dbReference type="Pfam" id="PF00861">
    <property type="entry name" value="Ribosomal_L18p"/>
    <property type="match status" value="1"/>
</dbReference>
<dbReference type="SUPFAM" id="SSF53137">
    <property type="entry name" value="Translational machinery components"/>
    <property type="match status" value="1"/>
</dbReference>
<gene>
    <name evidence="1" type="primary">rplR</name>
    <name type="ordered locus">Ppro_0696</name>
</gene>
<comment type="function">
    <text evidence="1">This is one of the proteins that bind and probably mediate the attachment of the 5S RNA into the large ribosomal subunit, where it forms part of the central protuberance.</text>
</comment>
<comment type="subunit">
    <text evidence="1">Part of the 50S ribosomal subunit; part of the 5S rRNA/L5/L18/L25 subcomplex. Contacts the 5S and 23S rRNAs.</text>
</comment>
<comment type="similarity">
    <text evidence="1">Belongs to the universal ribosomal protein uL18 family.</text>
</comment>
<name>RL18_PELPD</name>
<proteinExistence type="inferred from homology"/>
<keyword id="KW-1185">Reference proteome</keyword>
<keyword id="KW-0687">Ribonucleoprotein</keyword>
<keyword id="KW-0689">Ribosomal protein</keyword>
<keyword id="KW-0694">RNA-binding</keyword>
<keyword id="KW-0699">rRNA-binding</keyword>